<feature type="propeptide" id="PRO_0000031411" evidence="2">
    <location>
        <begin position="1"/>
        <end position="2"/>
    </location>
</feature>
<feature type="chain" id="PRO_0000031412" description="Ribulose bisphosphate carboxylase large chain">
    <location>
        <begin position="3"/>
        <end position="475"/>
    </location>
</feature>
<feature type="active site" description="Proton acceptor" evidence="1">
    <location>
        <position position="175"/>
    </location>
</feature>
<feature type="active site" description="Proton acceptor" evidence="1">
    <location>
        <position position="294"/>
    </location>
</feature>
<feature type="binding site" description="in homodimeric partner" evidence="1">
    <location>
        <position position="123"/>
    </location>
    <ligand>
        <name>substrate</name>
    </ligand>
</feature>
<feature type="binding site" evidence="1">
    <location>
        <position position="173"/>
    </location>
    <ligand>
        <name>substrate</name>
    </ligand>
</feature>
<feature type="binding site" evidence="1">
    <location>
        <position position="177"/>
    </location>
    <ligand>
        <name>substrate</name>
    </ligand>
</feature>
<feature type="binding site" description="via carbamate group" evidence="1">
    <location>
        <position position="201"/>
    </location>
    <ligand>
        <name>Mg(2+)</name>
        <dbReference type="ChEBI" id="CHEBI:18420"/>
    </ligand>
</feature>
<feature type="binding site" evidence="1">
    <location>
        <position position="203"/>
    </location>
    <ligand>
        <name>Mg(2+)</name>
        <dbReference type="ChEBI" id="CHEBI:18420"/>
    </ligand>
</feature>
<feature type="binding site" evidence="1">
    <location>
        <position position="204"/>
    </location>
    <ligand>
        <name>Mg(2+)</name>
        <dbReference type="ChEBI" id="CHEBI:18420"/>
    </ligand>
</feature>
<feature type="binding site" evidence="1">
    <location>
        <position position="295"/>
    </location>
    <ligand>
        <name>substrate</name>
    </ligand>
</feature>
<feature type="binding site" evidence="1">
    <location>
        <position position="327"/>
    </location>
    <ligand>
        <name>substrate</name>
    </ligand>
</feature>
<feature type="binding site" evidence="1">
    <location>
        <position position="379"/>
    </location>
    <ligand>
        <name>substrate</name>
    </ligand>
</feature>
<feature type="site" description="Transition state stabilizer" evidence="1">
    <location>
        <position position="334"/>
    </location>
</feature>
<feature type="modified residue" description="N-acetylproline" evidence="2">
    <location>
        <position position="3"/>
    </location>
</feature>
<feature type="modified residue" description="N6,N6,N6-trimethyllysine" evidence="2">
    <location>
        <position position="14"/>
    </location>
</feature>
<feature type="modified residue" description="N6-carboxylysine" evidence="1">
    <location>
        <position position="201"/>
    </location>
</feature>
<feature type="disulfide bond" description="Interchain; in linked form" evidence="1">
    <location>
        <position position="247"/>
    </location>
</feature>
<feature type="sequence conflict" description="In Ref. 1; CAB08877." evidence="3" ref="1">
    <original>A</original>
    <variation>S</variation>
    <location>
        <position position="143"/>
    </location>
</feature>
<feature type="sequence conflict" description="In Ref. 1; CAB08877." evidence="3" ref="1">
    <original>E</original>
    <variation>P</variation>
    <location>
        <position position="470"/>
    </location>
</feature>
<feature type="sequence conflict" description="In Ref. 1; CAB08877." evidence="3" ref="1">
    <location>
        <begin position="474"/>
        <end position="475"/>
    </location>
</feature>
<comment type="function">
    <text>RuBisCO catalyzes two reactions: the carboxylation of D-ribulose 1,5-bisphosphate, the primary event in carbon dioxide fixation, as well as the oxidative fragmentation of the pentose substrate in the photorespiration process. Both reactions occur simultaneously and in competition at the same active site.</text>
</comment>
<comment type="catalytic activity">
    <reaction>
        <text>2 (2R)-3-phosphoglycerate + 2 H(+) = D-ribulose 1,5-bisphosphate + CO2 + H2O</text>
        <dbReference type="Rhea" id="RHEA:23124"/>
        <dbReference type="ChEBI" id="CHEBI:15377"/>
        <dbReference type="ChEBI" id="CHEBI:15378"/>
        <dbReference type="ChEBI" id="CHEBI:16526"/>
        <dbReference type="ChEBI" id="CHEBI:57870"/>
        <dbReference type="ChEBI" id="CHEBI:58272"/>
        <dbReference type="EC" id="4.1.1.39"/>
    </reaction>
</comment>
<comment type="catalytic activity">
    <reaction>
        <text>D-ribulose 1,5-bisphosphate + O2 = 2-phosphoglycolate + (2R)-3-phosphoglycerate + 2 H(+)</text>
        <dbReference type="Rhea" id="RHEA:36631"/>
        <dbReference type="ChEBI" id="CHEBI:15378"/>
        <dbReference type="ChEBI" id="CHEBI:15379"/>
        <dbReference type="ChEBI" id="CHEBI:57870"/>
        <dbReference type="ChEBI" id="CHEBI:58033"/>
        <dbReference type="ChEBI" id="CHEBI:58272"/>
    </reaction>
</comment>
<comment type="cofactor">
    <cofactor evidence="1">
        <name>Mg(2+)</name>
        <dbReference type="ChEBI" id="CHEBI:18420"/>
    </cofactor>
    <text evidence="1">Binds 1 Mg(2+) ion per subunit.</text>
</comment>
<comment type="subunit">
    <text evidence="1">Heterohexadecamer of 8 large chains and 8 small chains; disulfide-linked. The disulfide link is formed within the large subunit homodimers (By similarity).</text>
</comment>
<comment type="subcellular location">
    <subcellularLocation>
        <location>Plastid</location>
        <location>Chloroplast</location>
    </subcellularLocation>
</comment>
<comment type="PTM">
    <text evidence="1">The disulfide bond which can form in the large chain dimeric partners within the hexadecamer appears to be associated with oxidative stress and protein turnover.</text>
</comment>
<comment type="miscellaneous">
    <text evidence="1">The basic functional RuBisCO is composed of a large chain homodimer in a 'head-to-tail' conformation. In form I RuBisCO this homodimer is arranged in a barrel-like tetramer with the small subunits forming a tetrameric 'cap' on each end of the 'barrel' (By similarity).</text>
</comment>
<comment type="similarity">
    <text evidence="3">Belongs to the RuBisCO large chain family. Type I subfamily.</text>
</comment>
<gene>
    <name type="primary">rbcL</name>
</gene>
<protein>
    <recommendedName>
        <fullName>Ribulose bisphosphate carboxylase large chain</fullName>
        <shortName>RuBisCO large subunit</shortName>
        <ecNumber>4.1.1.39</ecNumber>
    </recommendedName>
</protein>
<sequence length="475" mass="52610">MSPQTETKASVGFKAGVKDYKLTYYTPDYETKDTDILAAFRVTPQPGVPPEEAGAAVAAESSTGTWTTVWTDGLTSLDRYKGRCYGLEPVAGEENQYIAYVAYPLDLFEEGSVTNMFTSIVGNVFGFKALRALRLEDLRIPTAYIKTFQGPPHGIQVERDKLNKYGRPLLGCTIKPKLGLSAKNYGRAVYECLRGGLDFTKDDENVNSQPFMRWRDRFLFCAEAIFKSQAETGEIKGHYLNATAGTCEEMMKRAVFARELGVPIVMHDYLTGGFTANTSLAHYCRDNGLLLHIHRAMHAVIDRQKNHGMHFRVLAKALRLSGGDHVHAGTVVGKLEGEREITLGFVDLLRDDFVEKDRSRGIYFTQDWVSLPGVLPVASGGIHVWHMPALTEIFGDDSVLQFGGGTLGHPWGNAPGAVANRVALEACVQARNEGRDLAREGNEIIREASKWSPELAAACEVWKEIKFEFEAMDTL</sequence>
<geneLocation type="chloroplast"/>
<proteinExistence type="evidence at protein level"/>
<keyword id="KW-0007">Acetylation</keyword>
<keyword id="KW-0113">Calvin cycle</keyword>
<keyword id="KW-0120">Carbon dioxide fixation</keyword>
<keyword id="KW-0150">Chloroplast</keyword>
<keyword id="KW-0903">Direct protein sequencing</keyword>
<keyword id="KW-1015">Disulfide bond</keyword>
<keyword id="KW-0456">Lyase</keyword>
<keyword id="KW-0460">Magnesium</keyword>
<keyword id="KW-0479">Metal-binding</keyword>
<keyword id="KW-0488">Methylation</keyword>
<keyword id="KW-0503">Monooxygenase</keyword>
<keyword id="KW-0560">Oxidoreductase</keyword>
<keyword id="KW-0601">Photorespiration</keyword>
<keyword id="KW-0602">Photosynthesis</keyword>
<keyword id="KW-0934">Plastid</keyword>
<keyword id="KW-1185">Reference proteome</keyword>
<organism>
    <name type="scientific">Glycine max</name>
    <name type="common">Soybean</name>
    <name type="synonym">Glycine hispida</name>
    <dbReference type="NCBI Taxonomy" id="3847"/>
    <lineage>
        <taxon>Eukaryota</taxon>
        <taxon>Viridiplantae</taxon>
        <taxon>Streptophyta</taxon>
        <taxon>Embryophyta</taxon>
        <taxon>Tracheophyta</taxon>
        <taxon>Spermatophyta</taxon>
        <taxon>Magnoliopsida</taxon>
        <taxon>eudicotyledons</taxon>
        <taxon>Gunneridae</taxon>
        <taxon>Pentapetalae</taxon>
        <taxon>rosids</taxon>
        <taxon>fabids</taxon>
        <taxon>Fabales</taxon>
        <taxon>Fabaceae</taxon>
        <taxon>Papilionoideae</taxon>
        <taxon>50 kb inversion clade</taxon>
        <taxon>NPAAA clade</taxon>
        <taxon>indigoferoid/millettioid clade</taxon>
        <taxon>Phaseoleae</taxon>
        <taxon>Glycine</taxon>
        <taxon>Glycine subgen. Soja</taxon>
    </lineage>
</organism>
<reference key="1">
    <citation type="journal article" date="1997" name="Mol. Phylogenet. Evol.">
        <title>Phylogenetic relationships in the Papilionoideae (family Leguminosae) based on nucleotide sequences of cpDNA (rbcL) and ncDNA (ITS 1 and 2).</title>
        <authorList>
            <person name="Kaess E."/>
            <person name="Wink M."/>
        </authorList>
    </citation>
    <scope>NUCLEOTIDE SEQUENCE [GENOMIC DNA]</scope>
    <source>
        <tissue>Leaf</tissue>
    </source>
</reference>
<reference key="2">
    <citation type="journal article" date="2005" name="Plant Mol. Biol.">
        <title>Complete chloroplast genome sequence of Glycine max and comparative analyses with other legume genomes.</title>
        <authorList>
            <person name="Saski C."/>
            <person name="Lee S.-B."/>
            <person name="Daniell H."/>
            <person name="Wood T.C."/>
            <person name="Tomkins J."/>
            <person name="Kim H.-G."/>
            <person name="Jansen R.K."/>
        </authorList>
    </citation>
    <scope>NUCLEOTIDE SEQUENCE [LARGE SCALE GENOMIC DNA]</scope>
    <source>
        <strain>cv. PI 437654</strain>
    </source>
</reference>
<reference key="3">
    <citation type="journal article" date="1992" name="Plant Physiol.">
        <title>Posttranslational modifications in the amino-terminal region of the large subunit of ribulose-1,5-bisphosphate carboxylase/oxygenase from several plant species.</title>
        <authorList>
            <person name="Houtz R.L."/>
            <person name="Poneleit L."/>
            <person name="Jones S.B."/>
            <person name="Royer M."/>
            <person name="Stults J.T."/>
        </authorList>
    </citation>
    <scope>PROTEIN SEQUENCE OF 3-18</scope>
    <scope>METHYLATION AT LYS-14</scope>
    <scope>ACETYLATION AT PRO-3</scope>
</reference>
<accession>P27066</accession>
<accession>Q2PMV1</accession>
<dbReference type="EC" id="4.1.1.39"/>
<dbReference type="EMBL" id="Z95552">
    <property type="protein sequence ID" value="CAB08877.1"/>
    <property type="molecule type" value="Genomic_DNA"/>
</dbReference>
<dbReference type="EMBL" id="DQ317523">
    <property type="protein sequence ID" value="ABC25107.1"/>
    <property type="molecule type" value="Genomic_DNA"/>
</dbReference>
<dbReference type="RefSeq" id="YP_538747.1">
    <property type="nucleotide sequence ID" value="NC_007942.1"/>
</dbReference>
<dbReference type="SMR" id="P27066"/>
<dbReference type="FunCoup" id="P27066">
    <property type="interactions" value="813"/>
</dbReference>
<dbReference type="STRING" id="3847.P27066"/>
<dbReference type="iPTMnet" id="P27066"/>
<dbReference type="GeneID" id="3989271"/>
<dbReference type="KEGG" id="gmx:3989271"/>
<dbReference type="InParanoid" id="P27066"/>
<dbReference type="Proteomes" id="UP000008827">
    <property type="component" value="Chloroplast"/>
</dbReference>
<dbReference type="GO" id="GO:0009507">
    <property type="term" value="C:chloroplast"/>
    <property type="evidence" value="ECO:0007669"/>
    <property type="project" value="UniProtKB-SubCell"/>
</dbReference>
<dbReference type="GO" id="GO:0000287">
    <property type="term" value="F:magnesium ion binding"/>
    <property type="evidence" value="ECO:0007669"/>
    <property type="project" value="UniProtKB-UniRule"/>
</dbReference>
<dbReference type="GO" id="GO:0004497">
    <property type="term" value="F:monooxygenase activity"/>
    <property type="evidence" value="ECO:0007669"/>
    <property type="project" value="UniProtKB-KW"/>
</dbReference>
<dbReference type="GO" id="GO:0016984">
    <property type="term" value="F:ribulose-bisphosphate carboxylase activity"/>
    <property type="evidence" value="ECO:0007669"/>
    <property type="project" value="UniProtKB-UniRule"/>
</dbReference>
<dbReference type="GO" id="GO:0009853">
    <property type="term" value="P:photorespiration"/>
    <property type="evidence" value="ECO:0007669"/>
    <property type="project" value="UniProtKB-KW"/>
</dbReference>
<dbReference type="GO" id="GO:0019253">
    <property type="term" value="P:reductive pentose-phosphate cycle"/>
    <property type="evidence" value="ECO:0007669"/>
    <property type="project" value="UniProtKB-UniRule"/>
</dbReference>
<dbReference type="CDD" id="cd08212">
    <property type="entry name" value="RuBisCO_large_I"/>
    <property type="match status" value="1"/>
</dbReference>
<dbReference type="FunFam" id="3.20.20.110:FF:000001">
    <property type="entry name" value="Ribulose bisphosphate carboxylase large chain"/>
    <property type="match status" value="1"/>
</dbReference>
<dbReference type="FunFam" id="3.30.70.150:FF:000001">
    <property type="entry name" value="Ribulose bisphosphate carboxylase large chain"/>
    <property type="match status" value="1"/>
</dbReference>
<dbReference type="Gene3D" id="3.20.20.110">
    <property type="entry name" value="Ribulose bisphosphate carboxylase, large subunit, C-terminal domain"/>
    <property type="match status" value="1"/>
</dbReference>
<dbReference type="Gene3D" id="3.30.70.150">
    <property type="entry name" value="RuBisCO large subunit, N-terminal domain"/>
    <property type="match status" value="1"/>
</dbReference>
<dbReference type="HAMAP" id="MF_01338">
    <property type="entry name" value="RuBisCO_L_type1"/>
    <property type="match status" value="1"/>
</dbReference>
<dbReference type="InterPro" id="IPR033966">
    <property type="entry name" value="RuBisCO"/>
</dbReference>
<dbReference type="InterPro" id="IPR020878">
    <property type="entry name" value="RuBisCo_large_chain_AS"/>
</dbReference>
<dbReference type="InterPro" id="IPR000685">
    <property type="entry name" value="RuBisCO_lsu_C"/>
</dbReference>
<dbReference type="InterPro" id="IPR036376">
    <property type="entry name" value="RuBisCO_lsu_C_sf"/>
</dbReference>
<dbReference type="InterPro" id="IPR017443">
    <property type="entry name" value="RuBisCO_lsu_fd_N"/>
</dbReference>
<dbReference type="InterPro" id="IPR036422">
    <property type="entry name" value="RuBisCO_lsu_N_sf"/>
</dbReference>
<dbReference type="InterPro" id="IPR020888">
    <property type="entry name" value="RuBisCO_lsuI"/>
</dbReference>
<dbReference type="NCBIfam" id="NF003252">
    <property type="entry name" value="PRK04208.1"/>
    <property type="match status" value="1"/>
</dbReference>
<dbReference type="PANTHER" id="PTHR42704">
    <property type="entry name" value="RIBULOSE BISPHOSPHATE CARBOXYLASE"/>
    <property type="match status" value="1"/>
</dbReference>
<dbReference type="PANTHER" id="PTHR42704:SF16">
    <property type="entry name" value="RIBULOSE BISPHOSPHATE CARBOXYLASE LARGE CHAIN"/>
    <property type="match status" value="1"/>
</dbReference>
<dbReference type="Pfam" id="PF00016">
    <property type="entry name" value="RuBisCO_large"/>
    <property type="match status" value="1"/>
</dbReference>
<dbReference type="Pfam" id="PF02788">
    <property type="entry name" value="RuBisCO_large_N"/>
    <property type="match status" value="1"/>
</dbReference>
<dbReference type="SFLD" id="SFLDG01052">
    <property type="entry name" value="RuBisCO"/>
    <property type="match status" value="1"/>
</dbReference>
<dbReference type="SFLD" id="SFLDS00014">
    <property type="entry name" value="RuBisCO"/>
    <property type="match status" value="1"/>
</dbReference>
<dbReference type="SFLD" id="SFLDG00301">
    <property type="entry name" value="RuBisCO-like_proteins"/>
    <property type="match status" value="1"/>
</dbReference>
<dbReference type="SUPFAM" id="SSF51649">
    <property type="entry name" value="RuBisCo, C-terminal domain"/>
    <property type="match status" value="1"/>
</dbReference>
<dbReference type="SUPFAM" id="SSF54966">
    <property type="entry name" value="RuBisCO, large subunit, small (N-terminal) domain"/>
    <property type="match status" value="1"/>
</dbReference>
<dbReference type="PROSITE" id="PS00157">
    <property type="entry name" value="RUBISCO_LARGE"/>
    <property type="match status" value="1"/>
</dbReference>
<name>RBL_SOYBN</name>
<evidence type="ECO:0000250" key="1"/>
<evidence type="ECO:0000269" key="2">
    <source>
    </source>
</evidence>
<evidence type="ECO:0000305" key="3"/>